<organism>
    <name type="scientific">Armillaria gallica</name>
    <name type="common">Bulbous honey fungus</name>
    <name type="synonym">Armillaria bulbosa</name>
    <dbReference type="NCBI Taxonomy" id="47427"/>
    <lineage>
        <taxon>Eukaryota</taxon>
        <taxon>Fungi</taxon>
        <taxon>Dikarya</taxon>
        <taxon>Basidiomycota</taxon>
        <taxon>Agaricomycotina</taxon>
        <taxon>Agaricomycetes</taxon>
        <taxon>Agaricomycetidae</taxon>
        <taxon>Agaricales</taxon>
        <taxon>Marasmiineae</taxon>
        <taxon>Physalacriaceae</taxon>
        <taxon>Armillaria</taxon>
    </lineage>
</organism>
<name>ARMP3_ARMGA</name>
<dbReference type="EC" id="1.-.-.-"/>
<dbReference type="EMBL" id="KZ293696">
    <property type="protein sequence ID" value="PBK84742.1"/>
    <property type="molecule type" value="Genomic_DNA"/>
</dbReference>
<dbReference type="SMR" id="A0A2H3CZX2"/>
<dbReference type="STRING" id="47427.A0A2H3CZX2"/>
<dbReference type="InParanoid" id="A0A2H3CZX2"/>
<dbReference type="OMA" id="LLWEQPE"/>
<dbReference type="OrthoDB" id="2789670at2759"/>
<dbReference type="Proteomes" id="UP000217790">
    <property type="component" value="Unassembled WGS sequence"/>
</dbReference>
<dbReference type="GO" id="GO:0016020">
    <property type="term" value="C:membrane"/>
    <property type="evidence" value="ECO:0007669"/>
    <property type="project" value="UniProtKB-SubCell"/>
</dbReference>
<dbReference type="GO" id="GO:0020037">
    <property type="term" value="F:heme binding"/>
    <property type="evidence" value="ECO:0007669"/>
    <property type="project" value="InterPro"/>
</dbReference>
<dbReference type="GO" id="GO:0005506">
    <property type="term" value="F:iron ion binding"/>
    <property type="evidence" value="ECO:0007669"/>
    <property type="project" value="InterPro"/>
</dbReference>
<dbReference type="GO" id="GO:0004497">
    <property type="term" value="F:monooxygenase activity"/>
    <property type="evidence" value="ECO:0007669"/>
    <property type="project" value="UniProtKB-KW"/>
</dbReference>
<dbReference type="GO" id="GO:0016705">
    <property type="term" value="F:oxidoreductase activity, acting on paired donors, with incorporation or reduction of molecular oxygen"/>
    <property type="evidence" value="ECO:0007669"/>
    <property type="project" value="InterPro"/>
</dbReference>
<dbReference type="CDD" id="cd11065">
    <property type="entry name" value="CYP64-like"/>
    <property type="match status" value="1"/>
</dbReference>
<dbReference type="Gene3D" id="1.10.630.10">
    <property type="entry name" value="Cytochrome P450"/>
    <property type="match status" value="1"/>
</dbReference>
<dbReference type="InterPro" id="IPR001128">
    <property type="entry name" value="Cyt_P450"/>
</dbReference>
<dbReference type="InterPro" id="IPR002401">
    <property type="entry name" value="Cyt_P450_E_grp-I"/>
</dbReference>
<dbReference type="InterPro" id="IPR036396">
    <property type="entry name" value="Cyt_P450_sf"/>
</dbReference>
<dbReference type="InterPro" id="IPR050364">
    <property type="entry name" value="Cytochrome_P450_fung"/>
</dbReference>
<dbReference type="PANTHER" id="PTHR46300:SF2">
    <property type="entry name" value="CYTOCHROME P450 MONOOXYGENASE ALNH-RELATED"/>
    <property type="match status" value="1"/>
</dbReference>
<dbReference type="PANTHER" id="PTHR46300">
    <property type="entry name" value="P450, PUTATIVE (EUROFUNG)-RELATED-RELATED"/>
    <property type="match status" value="1"/>
</dbReference>
<dbReference type="Pfam" id="PF00067">
    <property type="entry name" value="p450"/>
    <property type="match status" value="1"/>
</dbReference>
<dbReference type="PRINTS" id="PR00463">
    <property type="entry name" value="EP450I"/>
</dbReference>
<dbReference type="PRINTS" id="PR00385">
    <property type="entry name" value="P450"/>
</dbReference>
<dbReference type="SUPFAM" id="SSF48264">
    <property type="entry name" value="Cytochrome P450"/>
    <property type="match status" value="1"/>
</dbReference>
<proteinExistence type="evidence at protein level"/>
<comment type="function">
    <text evidence="1 5 14">Cytochrome P450 monooxygenase, part of the gene cluster that mediates the biosynthesis of melleolides, a range of antifungal and phytotoxic polyketide derivatives composed of an orsellinic acid (OA) moiety esterified to various sesquiterpene alcohols (Probable). The first step in melleolides biosynthesis is performed by the delta(6)-protoilludene synthase PRO1 which catalyzes the cyclization of farnesyl diphosphate to protoilludene (PubMed:21148562). The orsellinic acid synthase armB produces OA by condensing acetyl-CoA with 3 malonyl-CoA units in a three-round chain elongation reaction folowed by a C2-C7 ring closure (By similarity). ArmB further catalyzes the trans-esterification of OA to the various sesquiterpene alcohols resulting from the hydroxylation of protoilludene (By similarity). The melleolides cluster also includes 5 cytochrome P450 monooxygenases, 4 NAD(+)-dependent oxidoreductases, one flavin-dependent oxidoreductase, and one O-methyltransferase (By similarity). The cytochrome P450 monooxygenases may be involved in protoilludene hydroxylation to elaborate melleolides with multiple alcohol groups, such as melleolide D, which carries alcohol functionalities at C-4, C-5, C-10, and C-13 (By similarity). The role of the NAD(+)-dependent enzymes remains unknown (By similarity). Numerous melleolides, including arnamial, show 5'-O-methylation of the aromatic moiety which may be catalyzed by the methyltransferase encoded in the cluster (By similarity). The flavin-dependent oxidoreductase might represent the dehydrogenase yielding the aldehyde in position 1 of arnamial and other melleolides (By similarity). Finally, several halogenase localized outside of the cluster, are able to catalyze the transfer of a single chlorine atom to the melleolide backbone, resulting in a 6'-chloromelleolide product (By similarity).</text>
</comment>
<comment type="cofactor">
    <cofactor evidence="2">
        <name>heme</name>
        <dbReference type="ChEBI" id="CHEBI:30413"/>
    </cofactor>
</comment>
<comment type="pathway">
    <text evidence="14">Secondary metabolite biosynthesis.</text>
</comment>
<comment type="subcellular location">
    <subcellularLocation>
        <location evidence="3">Membrane</location>
        <topology evidence="3">Single-pass membrane protein</topology>
    </subcellularLocation>
</comment>
<comment type="biotechnology">
    <text evidence="6 7 8 9 10 12">Melleolide sesquiterpene aryl esters are cytotoxic secondary products with anti-cancer potential (PubMed:21376582, PubMed:26952552). Armillaridin shows therapeutic and radiosensitizing effects on human esophageal cancer cells (PubMed:23864890). Armillaridin induces autophagy-associated cell death in human chronic myelogenous leukemia as well as of hepatocellular carcinoma cells (PubMed:27592257, PubMed:31488037). Armillaridin can also inhibit the differentiation and activation of human macrophages and thus might have potential to be developed as a biological response modifier for inflammatory diseases (PubMed:25746621).</text>
</comment>
<comment type="miscellaneous">
    <text evidence="11 13 15">Armillaria species are both devastating forest pathogens and some of the largest and oldest terrestrial organisms on Earth (Probable) (PubMed:31746694). They forage for hosts and achieve immense colony sizes via rhizomorphs, root-like multicellular structures of clonal dispersal (Probable). One genetic Armillaria gallica individual localized in Michigan's Upper Peninsula stands out as exceptionally large, covering hundreds of tree root systems over approximately 75 hectares of the forest floor (PubMed:30963893). Based on observed growth rates of the fungus, the minimum age of this large individual can be estimated as 2500 years (PubMed:30963893).</text>
</comment>
<comment type="similarity">
    <text evidence="14">Belongs to the cytochrome P450 family.</text>
</comment>
<reference key="1">
    <citation type="journal article" date="2017" name="Nat. Ecol. Evol.">
        <title>Genome expansion and lineage-specific genetic innovations in the forest pathogenic fungi Armillaria.</title>
        <authorList>
            <person name="Sipos G."/>
            <person name="Prasanna A.N."/>
            <person name="Walter M.C."/>
            <person name="O'Connor E."/>
            <person name="Balint B."/>
            <person name="Krizsan K."/>
            <person name="Kiss B."/>
            <person name="Hess J."/>
            <person name="Varga T."/>
            <person name="Slot J."/>
            <person name="Riley R."/>
            <person name="Boka B."/>
            <person name="Rigling D."/>
            <person name="Barry K."/>
            <person name="Lee J."/>
            <person name="Mihaltcheva S."/>
            <person name="LaButti K."/>
            <person name="Lipzen A."/>
            <person name="Waldron R."/>
            <person name="Moloney N.M."/>
            <person name="Sperisen C."/>
            <person name="Kredics L."/>
            <person name="Vagvoelgyi C."/>
            <person name="Patrignani A."/>
            <person name="Fitzpatrick D."/>
            <person name="Nagy I."/>
            <person name="Doyle S."/>
            <person name="Anderson J.B."/>
            <person name="Grigoriev I.V."/>
            <person name="Gueldener U."/>
            <person name="Muensterkoetter M."/>
            <person name="Nagy L.G."/>
        </authorList>
    </citation>
    <scope>NUCLEOTIDE SEQUENCE [LARGE SCALE GENOMIC DNA]</scope>
    <source>
        <strain>Ar21-2</strain>
    </source>
</reference>
<reference key="2">
    <citation type="journal article" date="2011" name="Bioorg. Med. Chem. Lett.">
        <title>In vitro cytotoxicity of melleolide antibiotics: structural and mechanistic aspects.</title>
        <authorList>
            <person name="Bohnert M."/>
            <person name="Miethbauer S."/>
            <person name="Dahse H.M."/>
            <person name="Ziemen J."/>
            <person name="Nett M."/>
            <person name="Hoffmeister D."/>
        </authorList>
    </citation>
    <scope>BIOTECHNOLOGY</scope>
</reference>
<reference key="3">
    <citation type="journal article" date="2011" name="J. Biol. Chem.">
        <title>Cloning and characterization of an Armillaria gallica cDNA encoding protoilludene synthase, which catalyzes the first committed step in the synthesis of antimicrobial melleolides.</title>
        <authorList>
            <person name="Engels B."/>
            <person name="Heinig U."/>
            <person name="Grothe T."/>
            <person name="Stadler M."/>
            <person name="Jennewein S."/>
        </authorList>
    </citation>
    <scope>FUNCTION</scope>
    <source>
        <strain>FU02472</strain>
    </source>
</reference>
<reference key="4">
    <citation type="journal article" date="2013" name="Evid. Based Complement Alternat. Med.">
        <title>Therapeutic and radiosensitizing effects of armillaridin on human esophageal cancer cells.</title>
        <authorList>
            <person name="Chi C.W."/>
            <person name="Chen C.C."/>
            <person name="Chen Y.J."/>
        </authorList>
    </citation>
    <scope>BIOTECHNOLOGY</scope>
</reference>
<reference key="5">
    <citation type="journal article" date="2015" name="Int. J. Med. Mushrooms">
        <title>Armillaridin, a honey medicinal mushroom, Armillaria mellea (higher basidiomycetes) component, inhibits differentiation and activation of human macrophages.</title>
        <authorList>
            <person name="Liu T.P."/>
            <person name="Chen C.C."/>
            <person name="Shiao P.Y."/>
            <person name="Shieh H.R."/>
            <person name="Chen Y.Y."/>
            <person name="Chen Y.J."/>
        </authorList>
    </citation>
    <scope>BIOTECHNOLOGY</scope>
</reference>
<reference key="6">
    <citation type="journal article" date="2016" name="J. Ethnopharmacol.">
        <title>Structure, cytotoxic activity and mechanism of protoilludane sesquiterpene aryl esters from the mycelium of Armillaria mellea.</title>
        <authorList>
            <person name="Li Z."/>
            <person name="Wang Y."/>
            <person name="Jiang B."/>
            <person name="Li W."/>
            <person name="Zheng L."/>
            <person name="Yang X."/>
            <person name="Bao Y."/>
            <person name="Sun L."/>
            <person name="Huang Y."/>
            <person name="Li Y."/>
        </authorList>
    </citation>
    <scope>BIOTECHNOLOGY</scope>
</reference>
<reference key="7">
    <citation type="journal article" date="2016" name="Tumor Biol.">
        <title>Armillaridin induces autophagy-associated cell death in human chronic myelogenous leukemia K562 cells.</title>
        <authorList>
            <person name="Chang W.H."/>
            <person name="Huang H.L."/>
            <person name="Huang W.P."/>
            <person name="Chen C.C."/>
            <person name="Chen Y.J."/>
        </authorList>
    </citation>
    <scope>BIOTECHNOLOGY</scope>
</reference>
<reference key="8">
    <citation type="journal article" date="2018" name="Curr. Biol.">
        <title>Armillaria.</title>
        <authorList>
            <person name="Sipos G."/>
            <person name="Anderson J.B."/>
            <person name="Nagy L.G."/>
        </authorList>
    </citation>
    <scope>MISCELLANEOUS</scope>
</reference>
<reference key="9">
    <citation type="journal article" date="2018" name="Proc. R. Soc. B">
        <title>Clonal evolution and genome stability in a 2500-year-old fungal individual.</title>
        <authorList>
            <person name="Anderson J.B."/>
            <person name="Bruhn J.N."/>
            <person name="Kasimer D."/>
            <person name="Wang H."/>
            <person name="Rodrigue N."/>
            <person name="Smith M.L."/>
        </authorList>
    </citation>
    <scope>MISCELLANEOUS</scope>
</reference>
<reference key="10">
    <citation type="journal article" date="2019" name="Am. J. Chin. Med.">
        <title>Induction of autophagic death of human hepatocellular carcinoma cells by armillaridin from Armillaria mellea.</title>
        <authorList>
            <person name="Leu Y.S."/>
            <person name="Chen Y.J."/>
            <person name="Chen C.C."/>
            <person name="Huang H.L."/>
        </authorList>
    </citation>
    <scope>BIOTECHNOLOGY</scope>
</reference>
<reference key="11">
    <citation type="journal article" date="2020" name="Plant Dis.">
        <title>Susceptibility of garden trees and shrubs to Armillaria root rot.</title>
        <authorList>
            <person name="Cromey M.G."/>
            <person name="Drakulic J."/>
            <person name="Beal E.J."/>
            <person name="Waghorn I.A.G."/>
            <person name="Perry J.N."/>
            <person name="Clover G.R.G."/>
        </authorList>
    </citation>
    <scope>MISCELLANEOUS</scope>
</reference>
<feature type="chain" id="PRO_0000449410" description="Cytochrome P450 monooxygenase ARMGADRAFT_1018420">
    <location>
        <begin position="1"/>
        <end position="521"/>
    </location>
</feature>
<feature type="transmembrane region" description="Helical" evidence="3">
    <location>
        <begin position="9"/>
        <end position="26"/>
    </location>
</feature>
<feature type="binding site" description="axial binding residue" evidence="2">
    <location>
        <position position="443"/>
    </location>
    <ligand>
        <name>heme</name>
        <dbReference type="ChEBI" id="CHEBI:30413"/>
    </ligand>
    <ligandPart>
        <name>Fe</name>
        <dbReference type="ChEBI" id="CHEBI:18248"/>
    </ligandPart>
</feature>
<feature type="glycosylation site" description="N-linked (GlcNAc...) asparagine" evidence="4">
    <location>
        <position position="450"/>
    </location>
</feature>
<accession>A0A2H3CZX2</accession>
<evidence type="ECO:0000250" key="1">
    <source>
        <dbReference type="UniProtKB" id="I3ZNU9"/>
    </source>
</evidence>
<evidence type="ECO:0000250" key="2">
    <source>
        <dbReference type="UniProtKB" id="P04798"/>
    </source>
</evidence>
<evidence type="ECO:0000255" key="3"/>
<evidence type="ECO:0000255" key="4">
    <source>
        <dbReference type="PROSITE-ProRule" id="PRU00498"/>
    </source>
</evidence>
<evidence type="ECO:0000269" key="5">
    <source>
    </source>
</evidence>
<evidence type="ECO:0000269" key="6">
    <source>
    </source>
</evidence>
<evidence type="ECO:0000269" key="7">
    <source>
    </source>
</evidence>
<evidence type="ECO:0000269" key="8">
    <source>
    </source>
</evidence>
<evidence type="ECO:0000269" key="9">
    <source>
    </source>
</evidence>
<evidence type="ECO:0000269" key="10">
    <source>
    </source>
</evidence>
<evidence type="ECO:0000269" key="11">
    <source>
    </source>
</evidence>
<evidence type="ECO:0000269" key="12">
    <source>
    </source>
</evidence>
<evidence type="ECO:0000269" key="13">
    <source>
    </source>
</evidence>
<evidence type="ECO:0000305" key="14"/>
<evidence type="ECO:0000305" key="15">
    <source>
    </source>
</evidence>
<protein>
    <recommendedName>
        <fullName>Cytochrome P450 monooxygenase ARMGADRAFT_1018420</fullName>
        <ecNumber>1.-.-.-</ecNumber>
    </recommendedName>
    <alternativeName>
        <fullName>Melleolide biosynthesis cluster protein ARMGADRAFT_1018420</fullName>
    </alternativeName>
</protein>
<keyword id="KW-0325">Glycoprotein</keyword>
<keyword id="KW-0349">Heme</keyword>
<keyword id="KW-0408">Iron</keyword>
<keyword id="KW-0472">Membrane</keyword>
<keyword id="KW-0479">Metal-binding</keyword>
<keyword id="KW-0503">Monooxygenase</keyword>
<keyword id="KW-0560">Oxidoreductase</keyword>
<keyword id="KW-1185">Reference proteome</keyword>
<keyword id="KW-0812">Transmembrane</keyword>
<keyword id="KW-1133">Transmembrane helix</keyword>
<gene>
    <name type="ORF">ARMGADRAFT_1018420</name>
</gene>
<sequence length="521" mass="58735">MTRILSEEVSPIWILTAIVVVAYTTVRYLRSPWRNLPPGPRGLPLIGNLLELRGKQWLTFTELGKKYGDLMYFNVAGQPLVVLNSQKVAADLLDRRAGKYSDRPRNIVASDIMTGGNLVVFTRYGDVWRRMRKAAHEGLNKGVVYKYHPIQTAEAVLLTAGVLAEPEKWNSHIRRTAASAIMSMVYDTPPTSEQDPSVKNINDFVARLTRAAMPGAHFVEFFPWMRYIPSKYAKWKREAEESYTKDSAMFEGLFNGVKDRVAKGDERPSLASTLIQDAGRHDLTDRENSWLAGTMYAAGAETTSGVMSWWTLAMIVYPETQKRAQAELDAVVGRDRLPSFADYEHLPYIRAMVKEALRWRMVDPVGLPHTSTEDDVYDGYFIPAGTILIANVWHLNRDPEIYGPDAEHFNPARHLDKDGKLAPGPADTKEESHVTYGFGRRICVGRHVANNSLFIDIAMMLWAMNIERATDENGVPLPLDVDGCIEDGLVTRPVPFKAKITPRFQEAQAIVEQERELLGYH</sequence>